<evidence type="ECO:0000250" key="1">
    <source>
        <dbReference type="UniProtKB" id="K7IM66"/>
    </source>
</evidence>
<evidence type="ECO:0000250" key="2">
    <source>
        <dbReference type="UniProtKB" id="O70194"/>
    </source>
</evidence>
<evidence type="ECO:0000255" key="3">
    <source>
        <dbReference type="HAMAP-Rule" id="MF_03003"/>
    </source>
</evidence>
<evidence type="ECO:0000256" key="4">
    <source>
        <dbReference type="SAM" id="MobiDB-lite"/>
    </source>
</evidence>
<evidence type="ECO:0000269" key="5">
    <source>
    </source>
</evidence>
<evidence type="ECO:0000269" key="6">
    <source>
    </source>
</evidence>
<evidence type="ECO:0000269" key="7">
    <source>
    </source>
</evidence>
<evidence type="ECO:0000269" key="8">
    <source>
    </source>
</evidence>
<evidence type="ECO:0000269" key="9">
    <source>
    </source>
</evidence>
<evidence type="ECO:0000269" key="10">
    <source>
    </source>
</evidence>
<evidence type="ECO:0000269" key="11">
    <source>
    </source>
</evidence>
<evidence type="ECO:0000269" key="12">
    <source>
    </source>
</evidence>
<evidence type="ECO:0000269" key="13">
    <source>
    </source>
</evidence>
<evidence type="ECO:0000269" key="14">
    <source>
    </source>
</evidence>
<evidence type="ECO:0000269" key="15">
    <source>
    </source>
</evidence>
<evidence type="ECO:0000269" key="16">
    <source>
    </source>
</evidence>
<evidence type="ECO:0000269" key="17">
    <source>
    </source>
</evidence>
<evidence type="ECO:0000269" key="18">
    <source>
    </source>
</evidence>
<evidence type="ECO:0000269" key="19">
    <source>
    </source>
</evidence>
<evidence type="ECO:0000303" key="20">
    <source>
    </source>
</evidence>
<evidence type="ECO:0000305" key="21">
    <source>
    </source>
</evidence>
<evidence type="ECO:0007744" key="22">
    <source>
    </source>
</evidence>
<evidence type="ECO:0007744" key="23">
    <source>
    </source>
</evidence>
<evidence type="ECO:0007744" key="24">
    <source>
    </source>
</evidence>
<evidence type="ECO:0007744" key="25">
    <source>
    </source>
</evidence>
<evidence type="ECO:0007829" key="26">
    <source>
        <dbReference type="PDB" id="6YBD"/>
    </source>
</evidence>
<evidence type="ECO:0007829" key="27">
    <source>
        <dbReference type="PDB" id="6YBS"/>
    </source>
</evidence>
<evidence type="ECO:0007829" key="28">
    <source>
        <dbReference type="PDB" id="8RG0"/>
    </source>
</evidence>
<proteinExistence type="evidence at protein level"/>
<accession>O15371</accession>
<accession>A8MWD3</accession>
<accession>B2R7D4</accession>
<accession>B4DTF8</accession>
<accession>B4DVY1</accession>
<accession>Q3MJD9</accession>
<accession>Q5M9Q6</accession>
<reference key="1">
    <citation type="journal article" date="1997" name="J. Biol. Chem.">
        <title>Structure of cDNAs encoding human eukaryotic initiation factor 3 subunits. Possible roles in RNA binding and macromolecular assembly.</title>
        <authorList>
            <person name="Asano K."/>
            <person name="Vornlocher H.-P."/>
            <person name="Richter-Cook N.J."/>
            <person name="Merrick W.C."/>
            <person name="Hinnebusch A.G."/>
            <person name="Hershey J.W.B."/>
        </authorList>
    </citation>
    <scope>NUCLEOTIDE SEQUENCE [MRNA] (ISOFORM 1)</scope>
    <source>
        <tissue>Liver</tissue>
    </source>
</reference>
<reference key="2">
    <citation type="submission" date="2003-05" db="EMBL/GenBank/DDBJ databases">
        <title>Cloning of human full-length CDSs in BD Creator(TM) system donor vector.</title>
        <authorList>
            <person name="Kalnine N."/>
            <person name="Chen X."/>
            <person name="Rolfs A."/>
            <person name="Halleck A."/>
            <person name="Hines L."/>
            <person name="Eisenstein S."/>
            <person name="Koundinya M."/>
            <person name="Raphael J."/>
            <person name="Moreira D."/>
            <person name="Kelley T."/>
            <person name="LaBaer J."/>
            <person name="Lin Y."/>
            <person name="Phelan M."/>
            <person name="Farmer A."/>
        </authorList>
    </citation>
    <scope>NUCLEOTIDE SEQUENCE [LARGE SCALE MRNA] (ISOFORM 1)</scope>
</reference>
<reference key="3">
    <citation type="journal article" date="2004" name="Genome Biol.">
        <title>A genome annotation-driven approach to cloning the human ORFeome.</title>
        <authorList>
            <person name="Collins J.E."/>
            <person name="Wright C.L."/>
            <person name="Edwards C.A."/>
            <person name="Davis M.P."/>
            <person name="Grinham J.A."/>
            <person name="Cole C.G."/>
            <person name="Goward M.E."/>
            <person name="Aguado B."/>
            <person name="Mallya M."/>
            <person name="Mokrab Y."/>
            <person name="Huckle E.J."/>
            <person name="Beare D.M."/>
            <person name="Dunham I."/>
        </authorList>
    </citation>
    <scope>NUCLEOTIDE SEQUENCE [LARGE SCALE MRNA] (ISOFORM 1)</scope>
</reference>
<reference key="4">
    <citation type="journal article" date="2004" name="Nat. Genet.">
        <title>Complete sequencing and characterization of 21,243 full-length human cDNAs.</title>
        <authorList>
            <person name="Ota T."/>
            <person name="Suzuki Y."/>
            <person name="Nishikawa T."/>
            <person name="Otsuki T."/>
            <person name="Sugiyama T."/>
            <person name="Irie R."/>
            <person name="Wakamatsu A."/>
            <person name="Hayashi K."/>
            <person name="Sato H."/>
            <person name="Nagai K."/>
            <person name="Kimura K."/>
            <person name="Makita H."/>
            <person name="Sekine M."/>
            <person name="Obayashi M."/>
            <person name="Nishi T."/>
            <person name="Shibahara T."/>
            <person name="Tanaka T."/>
            <person name="Ishii S."/>
            <person name="Yamamoto J."/>
            <person name="Saito K."/>
            <person name="Kawai Y."/>
            <person name="Isono Y."/>
            <person name="Nakamura Y."/>
            <person name="Nagahari K."/>
            <person name="Murakami K."/>
            <person name="Yasuda T."/>
            <person name="Iwayanagi T."/>
            <person name="Wagatsuma M."/>
            <person name="Shiratori A."/>
            <person name="Sudo H."/>
            <person name="Hosoiri T."/>
            <person name="Kaku Y."/>
            <person name="Kodaira H."/>
            <person name="Kondo H."/>
            <person name="Sugawara M."/>
            <person name="Takahashi M."/>
            <person name="Kanda K."/>
            <person name="Yokoi T."/>
            <person name="Furuya T."/>
            <person name="Kikkawa E."/>
            <person name="Omura Y."/>
            <person name="Abe K."/>
            <person name="Kamihara K."/>
            <person name="Katsuta N."/>
            <person name="Sato K."/>
            <person name="Tanikawa M."/>
            <person name="Yamazaki M."/>
            <person name="Ninomiya K."/>
            <person name="Ishibashi T."/>
            <person name="Yamashita H."/>
            <person name="Murakawa K."/>
            <person name="Fujimori K."/>
            <person name="Tanai H."/>
            <person name="Kimata M."/>
            <person name="Watanabe M."/>
            <person name="Hiraoka S."/>
            <person name="Chiba Y."/>
            <person name="Ishida S."/>
            <person name="Ono Y."/>
            <person name="Takiguchi S."/>
            <person name="Watanabe S."/>
            <person name="Yosida M."/>
            <person name="Hotuta T."/>
            <person name="Kusano J."/>
            <person name="Kanehori K."/>
            <person name="Takahashi-Fujii A."/>
            <person name="Hara H."/>
            <person name="Tanase T.-O."/>
            <person name="Nomura Y."/>
            <person name="Togiya S."/>
            <person name="Komai F."/>
            <person name="Hara R."/>
            <person name="Takeuchi K."/>
            <person name="Arita M."/>
            <person name="Imose N."/>
            <person name="Musashino K."/>
            <person name="Yuuki H."/>
            <person name="Oshima A."/>
            <person name="Sasaki N."/>
            <person name="Aotsuka S."/>
            <person name="Yoshikawa Y."/>
            <person name="Matsunawa H."/>
            <person name="Ichihara T."/>
            <person name="Shiohata N."/>
            <person name="Sano S."/>
            <person name="Moriya S."/>
            <person name="Momiyama H."/>
            <person name="Satoh N."/>
            <person name="Takami S."/>
            <person name="Terashima Y."/>
            <person name="Suzuki O."/>
            <person name="Nakagawa S."/>
            <person name="Senoh A."/>
            <person name="Mizoguchi H."/>
            <person name="Goto Y."/>
            <person name="Shimizu F."/>
            <person name="Wakebe H."/>
            <person name="Hishigaki H."/>
            <person name="Watanabe T."/>
            <person name="Sugiyama A."/>
            <person name="Takemoto M."/>
            <person name="Kawakami B."/>
            <person name="Yamazaki M."/>
            <person name="Watanabe K."/>
            <person name="Kumagai A."/>
            <person name="Itakura S."/>
            <person name="Fukuzumi Y."/>
            <person name="Fujimori Y."/>
            <person name="Komiyama M."/>
            <person name="Tashiro H."/>
            <person name="Tanigami A."/>
            <person name="Fujiwara T."/>
            <person name="Ono T."/>
            <person name="Yamada K."/>
            <person name="Fujii Y."/>
            <person name="Ozaki K."/>
            <person name="Hirao M."/>
            <person name="Ohmori Y."/>
            <person name="Kawabata A."/>
            <person name="Hikiji T."/>
            <person name="Kobatake N."/>
            <person name="Inagaki H."/>
            <person name="Ikema Y."/>
            <person name="Okamoto S."/>
            <person name="Okitani R."/>
            <person name="Kawakami T."/>
            <person name="Noguchi S."/>
            <person name="Itoh T."/>
            <person name="Shigeta K."/>
            <person name="Senba T."/>
            <person name="Matsumura K."/>
            <person name="Nakajima Y."/>
            <person name="Mizuno T."/>
            <person name="Morinaga M."/>
            <person name="Sasaki M."/>
            <person name="Togashi T."/>
            <person name="Oyama M."/>
            <person name="Hata H."/>
            <person name="Watanabe M."/>
            <person name="Komatsu T."/>
            <person name="Mizushima-Sugano J."/>
            <person name="Satoh T."/>
            <person name="Shirai Y."/>
            <person name="Takahashi Y."/>
            <person name="Nakagawa K."/>
            <person name="Okumura K."/>
            <person name="Nagase T."/>
            <person name="Nomura N."/>
            <person name="Kikuchi H."/>
            <person name="Masuho Y."/>
            <person name="Yamashita R."/>
            <person name="Nakai K."/>
            <person name="Yada T."/>
            <person name="Nakamura Y."/>
            <person name="Ohara O."/>
            <person name="Isogai T."/>
            <person name="Sugano S."/>
        </authorList>
    </citation>
    <scope>NUCLEOTIDE SEQUENCE [LARGE SCALE MRNA] (ISOFORMS 1; 2 AND 3)</scope>
    <source>
        <tissue>Placenta</tissue>
        <tissue>Stomach</tissue>
    </source>
</reference>
<reference key="5">
    <citation type="journal article" date="1999" name="Nature">
        <title>The DNA sequence of human chromosome 22.</title>
        <authorList>
            <person name="Dunham I."/>
            <person name="Hunt A.R."/>
            <person name="Collins J.E."/>
            <person name="Bruskiewich R."/>
            <person name="Beare D.M."/>
            <person name="Clamp M."/>
            <person name="Smink L.J."/>
            <person name="Ainscough R."/>
            <person name="Almeida J.P."/>
            <person name="Babbage A.K."/>
            <person name="Bagguley C."/>
            <person name="Bailey J."/>
            <person name="Barlow K.F."/>
            <person name="Bates K.N."/>
            <person name="Beasley O.P."/>
            <person name="Bird C.P."/>
            <person name="Blakey S.E."/>
            <person name="Bridgeman A.M."/>
            <person name="Buck D."/>
            <person name="Burgess J."/>
            <person name="Burrill W.D."/>
            <person name="Burton J."/>
            <person name="Carder C."/>
            <person name="Carter N.P."/>
            <person name="Chen Y."/>
            <person name="Clark G."/>
            <person name="Clegg S.M."/>
            <person name="Cobley V.E."/>
            <person name="Cole C.G."/>
            <person name="Collier R.E."/>
            <person name="Connor R."/>
            <person name="Conroy D."/>
            <person name="Corby N.R."/>
            <person name="Coville G.J."/>
            <person name="Cox A.V."/>
            <person name="Davis J."/>
            <person name="Dawson E."/>
            <person name="Dhami P.D."/>
            <person name="Dockree C."/>
            <person name="Dodsworth S.J."/>
            <person name="Durbin R.M."/>
            <person name="Ellington A.G."/>
            <person name="Evans K.L."/>
            <person name="Fey J.M."/>
            <person name="Fleming K."/>
            <person name="French L."/>
            <person name="Garner A.A."/>
            <person name="Gilbert J.G.R."/>
            <person name="Goward M.E."/>
            <person name="Grafham D.V."/>
            <person name="Griffiths M.N.D."/>
            <person name="Hall C."/>
            <person name="Hall R.E."/>
            <person name="Hall-Tamlyn G."/>
            <person name="Heathcott R.W."/>
            <person name="Ho S."/>
            <person name="Holmes S."/>
            <person name="Hunt S.E."/>
            <person name="Jones M.C."/>
            <person name="Kershaw J."/>
            <person name="Kimberley A.M."/>
            <person name="King A."/>
            <person name="Laird G.K."/>
            <person name="Langford C.F."/>
            <person name="Leversha M.A."/>
            <person name="Lloyd C."/>
            <person name="Lloyd D.M."/>
            <person name="Martyn I.D."/>
            <person name="Mashreghi-Mohammadi M."/>
            <person name="Matthews L.H."/>
            <person name="Mccann O.T."/>
            <person name="Mcclay J."/>
            <person name="Mclaren S."/>
            <person name="McMurray A.A."/>
            <person name="Milne S.A."/>
            <person name="Mortimore B.J."/>
            <person name="Odell C.N."/>
            <person name="Pavitt R."/>
            <person name="Pearce A.V."/>
            <person name="Pearson D."/>
            <person name="Phillimore B.J.C.T."/>
            <person name="Phillips S.H."/>
            <person name="Plumb R.W."/>
            <person name="Ramsay H."/>
            <person name="Ramsey Y."/>
            <person name="Rogers L."/>
            <person name="Ross M.T."/>
            <person name="Scott C.E."/>
            <person name="Sehra H.K."/>
            <person name="Skuce C.D."/>
            <person name="Smalley S."/>
            <person name="Smith M.L."/>
            <person name="Soderlund C."/>
            <person name="Spragon L."/>
            <person name="Steward C.A."/>
            <person name="Sulston J.E."/>
            <person name="Swann R.M."/>
            <person name="Vaudin M."/>
            <person name="Wall M."/>
            <person name="Wallis J.M."/>
            <person name="Whiteley M.N."/>
            <person name="Willey D.L."/>
            <person name="Williams L."/>
            <person name="Williams S.A."/>
            <person name="Williamson H."/>
            <person name="Wilmer T.E."/>
            <person name="Wilming L."/>
            <person name="Wright C.L."/>
            <person name="Hubbard T."/>
            <person name="Bentley D.R."/>
            <person name="Beck S."/>
            <person name="Rogers J."/>
            <person name="Shimizu N."/>
            <person name="Minoshima S."/>
            <person name="Kawasaki K."/>
            <person name="Sasaki T."/>
            <person name="Asakawa S."/>
            <person name="Kudoh J."/>
            <person name="Shintani A."/>
            <person name="Shibuya K."/>
            <person name="Yoshizaki Y."/>
            <person name="Aoki N."/>
            <person name="Mitsuyama S."/>
            <person name="Roe B.A."/>
            <person name="Chen F."/>
            <person name="Chu L."/>
            <person name="Crabtree J."/>
            <person name="Deschamps S."/>
            <person name="Do A."/>
            <person name="Do T."/>
            <person name="Dorman A."/>
            <person name="Fang F."/>
            <person name="Fu Y."/>
            <person name="Hu P."/>
            <person name="Hua A."/>
            <person name="Kenton S."/>
            <person name="Lai H."/>
            <person name="Lao H.I."/>
            <person name="Lewis J."/>
            <person name="Lewis S."/>
            <person name="Lin S.-P."/>
            <person name="Loh P."/>
            <person name="Malaj E."/>
            <person name="Nguyen T."/>
            <person name="Pan H."/>
            <person name="Phan S."/>
            <person name="Qi S."/>
            <person name="Qian Y."/>
            <person name="Ray L."/>
            <person name="Ren Q."/>
            <person name="Shaull S."/>
            <person name="Sloan D."/>
            <person name="Song L."/>
            <person name="Wang Q."/>
            <person name="Wang Y."/>
            <person name="Wang Z."/>
            <person name="White J."/>
            <person name="Willingham D."/>
            <person name="Wu H."/>
            <person name="Yao Z."/>
            <person name="Zhan M."/>
            <person name="Zhang G."/>
            <person name="Chissoe S."/>
            <person name="Murray J."/>
            <person name="Miller N."/>
            <person name="Minx P."/>
            <person name="Fulton R."/>
            <person name="Johnson D."/>
            <person name="Bemis G."/>
            <person name="Bentley D."/>
            <person name="Bradshaw H."/>
            <person name="Bourne S."/>
            <person name="Cordes M."/>
            <person name="Du Z."/>
            <person name="Fulton L."/>
            <person name="Goela D."/>
            <person name="Graves T."/>
            <person name="Hawkins J."/>
            <person name="Hinds K."/>
            <person name="Kemp K."/>
            <person name="Latreille P."/>
            <person name="Layman D."/>
            <person name="Ozersky P."/>
            <person name="Rohlfing T."/>
            <person name="Scheet P."/>
            <person name="Walker C."/>
            <person name="Wamsley A."/>
            <person name="Wohldmann P."/>
            <person name="Pepin K."/>
            <person name="Nelson J."/>
            <person name="Korf I."/>
            <person name="Bedell J.A."/>
            <person name="Hillier L.W."/>
            <person name="Mardis E."/>
            <person name="Waterston R."/>
            <person name="Wilson R."/>
            <person name="Emanuel B.S."/>
            <person name="Shaikh T."/>
            <person name="Kurahashi H."/>
            <person name="Saitta S."/>
            <person name="Budarf M.L."/>
            <person name="McDermid H.E."/>
            <person name="Johnson A."/>
            <person name="Wong A.C.C."/>
            <person name="Morrow B.E."/>
            <person name="Edelmann L."/>
            <person name="Kim U.J."/>
            <person name="Shizuya H."/>
            <person name="Simon M.I."/>
            <person name="Dumanski J.P."/>
            <person name="Peyrard M."/>
            <person name="Kedra D."/>
            <person name="Seroussi E."/>
            <person name="Fransson I."/>
            <person name="Tapia I."/>
            <person name="Bruder C.E."/>
            <person name="O'Brien K.P."/>
            <person name="Wilkinson P."/>
            <person name="Bodenteich A."/>
            <person name="Hartman K."/>
            <person name="Hu X."/>
            <person name="Khan A.S."/>
            <person name="Lane L."/>
            <person name="Tilahun Y."/>
            <person name="Wright H."/>
        </authorList>
    </citation>
    <scope>NUCLEOTIDE SEQUENCE [LARGE SCALE GENOMIC DNA]</scope>
</reference>
<reference key="6">
    <citation type="submission" date="2005-07" db="EMBL/GenBank/DDBJ databases">
        <authorList>
            <person name="Mural R.J."/>
            <person name="Istrail S."/>
            <person name="Sutton G.G."/>
            <person name="Florea L."/>
            <person name="Halpern A.L."/>
            <person name="Mobarry C.M."/>
            <person name="Lippert R."/>
            <person name="Walenz B."/>
            <person name="Shatkay H."/>
            <person name="Dew I."/>
            <person name="Miller J.R."/>
            <person name="Flanigan M.J."/>
            <person name="Edwards N.J."/>
            <person name="Bolanos R."/>
            <person name="Fasulo D."/>
            <person name="Halldorsson B.V."/>
            <person name="Hannenhalli S."/>
            <person name="Turner R."/>
            <person name="Yooseph S."/>
            <person name="Lu F."/>
            <person name="Nusskern D.R."/>
            <person name="Shue B.C."/>
            <person name="Zheng X.H."/>
            <person name="Zhong F."/>
            <person name="Delcher A.L."/>
            <person name="Huson D.H."/>
            <person name="Kravitz S.A."/>
            <person name="Mouchard L."/>
            <person name="Reinert K."/>
            <person name="Remington K.A."/>
            <person name="Clark A.G."/>
            <person name="Waterman M.S."/>
            <person name="Eichler E.E."/>
            <person name="Adams M.D."/>
            <person name="Hunkapiller M.W."/>
            <person name="Myers E.W."/>
            <person name="Venter J.C."/>
        </authorList>
    </citation>
    <scope>NUCLEOTIDE SEQUENCE [LARGE SCALE GENOMIC DNA]</scope>
</reference>
<reference key="7">
    <citation type="journal article" date="2004" name="Genome Res.">
        <title>The status, quality, and expansion of the NIH full-length cDNA project: the Mammalian Gene Collection (MGC).</title>
        <authorList>
            <consortium name="The MGC Project Team"/>
        </authorList>
    </citation>
    <scope>NUCLEOTIDE SEQUENCE [LARGE SCALE MRNA] (ISOFORM 1)</scope>
    <source>
        <tissue>Brain</tissue>
        <tissue>Lung</tissue>
        <tissue>Muscle</tissue>
        <tissue>Skin</tissue>
        <tissue>Uterus</tissue>
    </source>
</reference>
<reference key="8">
    <citation type="journal article" date="2003" name="EMBO J.">
        <title>The genome-linked protein VPg of the Norwalk virus binds eIF3, suggesting its role in translation initiation complex recruitment.</title>
        <authorList>
            <person name="Daughenbaugh K.F."/>
            <person name="Fraser C.S."/>
            <person name="Hershey J.W."/>
            <person name="Hardy M.E."/>
        </authorList>
    </citation>
    <scope>INTERACTION WITH NORWALK VIRUS VPG PROTEIN (MICROBIAL INFECTION)</scope>
</reference>
<reference key="9">
    <citation type="journal article" date="2005" name="RNA">
        <title>Binding of eukaryotic initiation factor 3 to ribosomal 40S subunits and its role in ribosomal dissociation and anti-association.</title>
        <authorList>
            <person name="Kolupaeva V.G."/>
            <person name="Unbehaun A."/>
            <person name="Lomakin I.B."/>
            <person name="Hellen C.U.T."/>
            <person name="Pestova T.V."/>
        </authorList>
    </citation>
    <scope>CHARACTERIZATION OF THE EIF-3 COMPLEX</scope>
</reference>
<reference key="10">
    <citation type="journal article" date="2006" name="J. Biol. Chem.">
        <title>Translation initiation factor eIF4G-1 binds to eIF3 through the eIF3e subunit.</title>
        <authorList>
            <person name="LeFebvre A.K."/>
            <person name="Korneeva N.L."/>
            <person name="Trutschl M."/>
            <person name="Cvek U."/>
            <person name="Duzan R.D."/>
            <person name="Bradley C.A."/>
            <person name="Hershey J.W.B."/>
            <person name="Rhoads R.E."/>
        </authorList>
    </citation>
    <scope>IDENTIFICATION IN THE EIF-3 COMPLEX</scope>
    <scope>IDENTIFICATION BY MASS SPECTROMETRY</scope>
</reference>
<reference key="11">
    <citation type="journal article" date="2007" name="EMBO J.">
        <title>Reconstitution reveals the functional core of mammalian eIF3.</title>
        <authorList>
            <person name="Masutani M."/>
            <person name="Sonenberg N."/>
            <person name="Yokoyama S."/>
            <person name="Imataka H."/>
        </authorList>
    </citation>
    <scope>CHARACTERIZATION OF THE EIF-3 COMPLEX</scope>
</reference>
<reference key="12">
    <citation type="journal article" date="2007" name="Genes Dev.">
        <title>The mechanism of an exceptional case of reinitiation after translation of a long ORF reveals why such events do not generally occur in mammalian mRNA translation.</title>
        <authorList>
            <person name="Poyry T.A."/>
            <person name="Kaminski A."/>
            <person name="Connell E.J."/>
            <person name="Fraser C.S."/>
            <person name="Jackson R.J."/>
        </authorList>
    </citation>
    <scope>FUNCTION (MICROBIAL INFECTION)</scope>
</reference>
<reference key="13">
    <citation type="journal article" date="2007" name="Mol. Cell. Proteomics">
        <title>Structural characterization of the human eukaryotic initiation factor 3 protein complex by mass spectrometry.</title>
        <authorList>
            <person name="Damoc E."/>
            <person name="Fraser C.S."/>
            <person name="Zhou M."/>
            <person name="Videler H."/>
            <person name="Mayeur G.L."/>
            <person name="Hershey J.W.B."/>
            <person name="Doudna J.A."/>
            <person name="Robinson C.V."/>
            <person name="Leary J.A."/>
        </authorList>
    </citation>
    <scope>IDENTIFICATION IN THE EIF-3 COMPLEX</scope>
    <scope>CHARACTERIZATION OF THE EIF-3 COMPLEX</scope>
    <scope>MASS SPECTROMETRY</scope>
</reference>
<reference key="14">
    <citation type="journal article" date="2008" name="J. Proteome Res.">
        <title>Phosphoproteome of resting human platelets.</title>
        <authorList>
            <person name="Zahedi R.P."/>
            <person name="Lewandrowski U."/>
            <person name="Wiesner J."/>
            <person name="Wortelkamp S."/>
            <person name="Moebius J."/>
            <person name="Schuetz C."/>
            <person name="Walter U."/>
            <person name="Gambaryan S."/>
            <person name="Sickmann A."/>
        </authorList>
    </citation>
    <scope>IDENTIFICATION BY MASS SPECTROMETRY [LARGE SCALE ANALYSIS]</scope>
    <source>
        <tissue>Platelet</tissue>
    </source>
</reference>
<reference key="15">
    <citation type="journal article" date="2008" name="Mol. Cell">
        <title>Kinase-selective enrichment enables quantitative phosphoproteomics of the kinome across the cell cycle.</title>
        <authorList>
            <person name="Daub H."/>
            <person name="Olsen J.V."/>
            <person name="Bairlein M."/>
            <person name="Gnad F."/>
            <person name="Oppermann F.S."/>
            <person name="Korner R."/>
            <person name="Greff Z."/>
            <person name="Keri G."/>
            <person name="Stemmann O."/>
            <person name="Mann M."/>
        </authorList>
    </citation>
    <scope>IDENTIFICATION BY MASS SPECTROMETRY [LARGE SCALE ANALYSIS]</scope>
    <source>
        <tissue>Cervix carcinoma</tissue>
    </source>
</reference>
<reference key="16">
    <citation type="journal article" date="2008" name="Proc. Natl. Acad. Sci. U.S.A.">
        <title>A quantitative atlas of mitotic phosphorylation.</title>
        <authorList>
            <person name="Dephoure N."/>
            <person name="Zhou C."/>
            <person name="Villen J."/>
            <person name="Beausoleil S.A."/>
            <person name="Bakalarski C.E."/>
            <person name="Elledge S.J."/>
            <person name="Gygi S.P."/>
        </authorList>
    </citation>
    <scope>PHOSPHORYLATION [LARGE SCALE ANALYSIS] AT SER-529</scope>
    <scope>IDENTIFICATION BY MASS SPECTROMETRY [LARGE SCALE ANALYSIS]</scope>
    <source>
        <tissue>Cervix carcinoma</tissue>
    </source>
</reference>
<reference key="17">
    <citation type="journal article" date="2008" name="Proc. Natl. Acad. Sci. U.S.A.">
        <title>Mass spectrometry reveals modularity and a complete subunit interaction map of the eukaryotic translation factor eIF3.</title>
        <authorList>
            <person name="Zhou M."/>
            <person name="Sandercock A.M."/>
            <person name="Fraser C.S."/>
            <person name="Ridlova G."/>
            <person name="Stephens E."/>
            <person name="Schenauer M.R."/>
            <person name="Yokoi-Fong T."/>
            <person name="Barsky D."/>
            <person name="Leary J.A."/>
            <person name="Hershey J.W.B."/>
            <person name="Doudna J.A."/>
            <person name="Robinson C.V."/>
        </authorList>
    </citation>
    <scope>FUNCTION</scope>
    <scope>IDENTIFICATION IN THE EIF-3 COMPLEX</scope>
    <scope>CHARACTERIZATION OF THE EIF-3 COMPLEX</scope>
    <scope>MASS SPECTROMETRY</scope>
</reference>
<reference key="18">
    <citation type="journal article" date="2009" name="Sci. Signal.">
        <title>Quantitative phosphoproteomic analysis of T cell receptor signaling reveals system-wide modulation of protein-protein interactions.</title>
        <authorList>
            <person name="Mayya V."/>
            <person name="Lundgren D.H."/>
            <person name="Hwang S.-I."/>
            <person name="Rezaul K."/>
            <person name="Wu L."/>
            <person name="Eng J.K."/>
            <person name="Rodionov V."/>
            <person name="Han D.K."/>
        </authorList>
    </citation>
    <scope>PHOSPHORYLATION [LARGE SCALE ANALYSIS] AT SER-528 AND SER-529</scope>
    <scope>IDENTIFICATION BY MASS SPECTROMETRY [LARGE SCALE ANALYSIS]</scope>
    <source>
        <tissue>Leukemic T-cell</tissue>
    </source>
</reference>
<reference key="19">
    <citation type="journal article" date="2010" name="Sci. Signal.">
        <title>Quantitative phosphoproteomics reveals widespread full phosphorylation site occupancy during mitosis.</title>
        <authorList>
            <person name="Olsen J.V."/>
            <person name="Vermeulen M."/>
            <person name="Santamaria A."/>
            <person name="Kumar C."/>
            <person name="Miller M.L."/>
            <person name="Jensen L.J."/>
            <person name="Gnad F."/>
            <person name="Cox J."/>
            <person name="Jensen T.S."/>
            <person name="Nigg E.A."/>
            <person name="Brunak S."/>
            <person name="Mann M."/>
        </authorList>
    </citation>
    <scope>PHOSPHORYLATION [LARGE SCALE ANALYSIS] AT SER-529</scope>
    <scope>IDENTIFICATION BY MASS SPECTROMETRY [LARGE SCALE ANALYSIS]</scope>
    <source>
        <tissue>Cervix carcinoma</tissue>
    </source>
</reference>
<reference key="20">
    <citation type="journal article" date="2011" name="BMC Syst. Biol.">
        <title>Initial characterization of the human central proteome.</title>
        <authorList>
            <person name="Burkard T.R."/>
            <person name="Planyavsky M."/>
            <person name="Kaupe I."/>
            <person name="Breitwieser F.P."/>
            <person name="Buerckstuemmer T."/>
            <person name="Bennett K.L."/>
            <person name="Superti-Furga G."/>
            <person name="Colinge J."/>
        </authorList>
    </citation>
    <scope>IDENTIFICATION BY MASS SPECTROMETRY [LARGE SCALE ANALYSIS]</scope>
</reference>
<reference key="21">
    <citation type="journal article" date="2011" name="Sci. Signal.">
        <title>System-wide temporal characterization of the proteome and phosphoproteome of human embryonic stem cell differentiation.</title>
        <authorList>
            <person name="Rigbolt K.T."/>
            <person name="Prokhorova T.A."/>
            <person name="Akimov V."/>
            <person name="Henningsen J."/>
            <person name="Johansen P.T."/>
            <person name="Kratchmarova I."/>
            <person name="Kassem M."/>
            <person name="Mann M."/>
            <person name="Olsen J.V."/>
            <person name="Blagoev B."/>
        </authorList>
    </citation>
    <scope>PHOSPHORYLATION [LARGE SCALE ANALYSIS] AT SER-161</scope>
    <scope>IDENTIFICATION BY MASS SPECTROMETRY [LARGE SCALE ANALYSIS]</scope>
</reference>
<reference key="22">
    <citation type="journal article" date="2014" name="Biosci. Rep.">
        <title>Lentivirus-mediated knockdown of eukaryotic translation initiation factor 3 subunit D inhibits proliferation of HCT116 colon cancer cells.</title>
        <authorList>
            <person name="Yu X."/>
            <person name="Zheng B."/>
            <person name="Chai R."/>
        </authorList>
    </citation>
    <scope>POSSIBLE INVOLVEMENT IN CANCER</scope>
</reference>
<reference key="23">
    <citation type="journal article" date="2014" name="J. Proteomics">
        <title>An enzyme assisted RP-RPLC approach for in-depth analysis of human liver phosphoproteome.</title>
        <authorList>
            <person name="Bian Y."/>
            <person name="Song C."/>
            <person name="Cheng K."/>
            <person name="Dong M."/>
            <person name="Wang F."/>
            <person name="Huang J."/>
            <person name="Sun D."/>
            <person name="Wang L."/>
            <person name="Ye M."/>
            <person name="Zou H."/>
        </authorList>
    </citation>
    <scope>IDENTIFICATION BY MASS SPECTROMETRY [LARGE SCALE ANALYSIS]</scope>
    <source>
        <tissue>Liver</tissue>
    </source>
</reference>
<reference key="24">
    <citation type="journal article" date="2015" name="Biotechnol. Appl. Biochem.">
        <title>Knockdown of EIF3D suppresses proliferation of human melanoma cells through G2/M phase arrest.</title>
        <authorList>
            <person name="Li H."/>
            <person name="Zhou F."/>
            <person name="Wang H."/>
            <person name="Lin D."/>
            <person name="Chen G."/>
            <person name="Zuo X."/>
            <person name="Sun L."/>
            <person name="Zhang X."/>
            <person name="Yang S."/>
        </authorList>
    </citation>
    <scope>POSSIBLE INVOLVEMENT IN CANCER</scope>
</reference>
<reference key="25">
    <citation type="journal article" date="2015" name="Chem. Biol. Drug Des.">
        <title>RNAi-mediated silencing of eif3d alleviates proliferation and migration of glioma U251 and U87MG cells.</title>
        <authorList>
            <person name="Ren M."/>
            <person name="Zhou C."/>
            <person name="Liang H."/>
            <person name="Wang X."/>
            <person name="Xu L."/>
        </authorList>
    </citation>
    <scope>POSSIBLE INVOLVEMENT IN CANCER</scope>
</reference>
<reference key="26">
    <citation type="journal article" date="2015" name="Int. J. Clin. Exp. Pathol.">
        <title>Knockdown of eIF3D inhibits breast cancer cell proliferation and invasion through suppressing the Wnt/beta-catenin signaling pathway.</title>
        <authorList>
            <person name="Fan Y."/>
            <person name="Guo Y."/>
        </authorList>
    </citation>
    <scope>POSSIBLE INVOLVEMENT IN CANCER</scope>
</reference>
<reference key="27">
    <citation type="journal article" date="2015" name="Med. Oncol.">
        <title>Knockdown of eIF3d inhibits cell proliferation through G2/M phase arrest in non-small cell lung cancer.</title>
        <authorList>
            <person name="Lin Z."/>
            <person name="Xiong L."/>
            <person name="Lin Q."/>
        </authorList>
    </citation>
    <scope>POSSIBLE INVOLVEMENT IN CANCER</scope>
</reference>
<reference key="28">
    <citation type="journal article" date="2015" name="Med. Oncol.">
        <title>The oncogenic role of EIF3D is associated with increased cell cycle progression and motility in prostate cancer.</title>
        <authorList>
            <person name="Gao Y."/>
            <person name="Teng J."/>
            <person name="Hong Y."/>
            <person name="Qu F."/>
            <person name="Ren J."/>
            <person name="Li L."/>
            <person name="Pan X."/>
            <person name="Chen L."/>
            <person name="Yin L."/>
            <person name="Xu D."/>
            <person name="Cui X."/>
        </authorList>
    </citation>
    <scope>POSSIBLE INVOLVEMENT IN CANCER</scope>
</reference>
<reference key="29">
    <citation type="journal article" date="2015" name="Nature">
        <title>eIF3 targets cell-proliferation messenger RNAs for translational activation or repression.</title>
        <authorList>
            <person name="Lee A.S."/>
            <person name="Kranzusch P.J."/>
            <person name="Cate J.H."/>
        </authorList>
    </citation>
    <scope>FUNCTION</scope>
    <scope>IDENTIFICATION IN THE EIF-3 COMPLEX</scope>
</reference>
<reference key="30">
    <citation type="journal article" date="2016" name="Int. J. Oncol.">
        <title>EIF3D silencing suppresses renal cell carcinoma tumorigenesis via inducing G2/M arrest through downregulation of Cyclin B1/CDK1 signaling.</title>
        <authorList>
            <person name="Pan X.W."/>
            <person name="Chen L."/>
            <person name="Hong Y."/>
            <person name="Xu D.F."/>
            <person name="Liu X."/>
            <person name="Li L."/>
            <person name="Huang Y."/>
            <person name="Cui L.M."/>
            <person name="Gan S.S."/>
            <person name="Yang Q.W."/>
            <person name="Huang H."/>
            <person name="Qu F.J."/>
            <person name="Ye J.Q."/>
            <person name="Wang L.H."/>
            <person name="Cui X.G."/>
        </authorList>
    </citation>
    <scope>POSSIBLE INVOLVEMENT IN CANCER</scope>
</reference>
<reference key="31">
    <citation type="journal article" date="2016" name="Nature">
        <title>eIF3d is an mRNA cap-binding protein that is required for specialized translation initiation.</title>
        <authorList>
            <person name="Lee A.S."/>
            <person name="Kranzusch P.J."/>
            <person name="Doudna J.A."/>
            <person name="Cate J.H."/>
        </authorList>
    </citation>
    <scope>FUNCTION</scope>
    <scope>DOMAIN</scope>
    <scope>RNA-BINDING</scope>
    <scope>IDENTIFICATION BY MASS SPECTROMETRY</scope>
    <scope>MUTAGENESIS OF ASP-249; 262-VAL-TYR-263 AND 317-THR--HIS-321</scope>
</reference>
<reference key="32">
    <citation type="journal article" date="2005" name="Science">
        <title>Structural roles for human translation factor eIF3 in initiation of protein synthesis.</title>
        <authorList>
            <person name="Siridechadilok B."/>
            <person name="Fraser C.S."/>
            <person name="Hall R.J."/>
            <person name="Doudna J.A."/>
            <person name="Nogales E."/>
        </authorList>
    </citation>
    <scope>3D-STRUCTURE MODELING</scope>
    <scope>ELECTRON MICROSCOPY</scope>
</reference>
<reference key="33">
    <citation type="journal article" date="2015" name="Proc. Natl. Acad. Sci. U.S.A.">
        <title>Neomorphic effects of recurrent somatic mutations in Yin Yang 1 in insulin-producing adenomas.</title>
        <authorList>
            <person name="Cromer M.K."/>
            <person name="Choi M."/>
            <person name="Nelson-Williams C."/>
            <person name="Fonseca A.L."/>
            <person name="Kunstman J.W."/>
            <person name="Korah R.M."/>
            <person name="Overton J.D."/>
            <person name="Mane S."/>
            <person name="Kenney B."/>
            <person name="Malchoff C.D."/>
            <person name="Stalberg P."/>
            <person name="Akerstroem G."/>
            <person name="Westin G."/>
            <person name="Hellman P."/>
            <person name="Carling T."/>
            <person name="Bjoerklund P."/>
            <person name="Lifton R.P."/>
        </authorList>
    </citation>
    <scope>VARIANT CYS-310</scope>
</reference>
<name>EIF3D_HUMAN</name>
<sequence>MAKFMTPVIQDNPSGWGPCAVPEQFRDMPYQPFSKGDRLGKVADWTGATYQDKRYTNKYSSQFGGGSQYAYFHEEDESSFQLVDTARTQKTAYQRNRMRFAQRNLRRDKDRRNMLQFNLQILPKSAKQKERERIRLQKKFQKQFGVRQKWDQKSQKPRDSSVEVRSDWEVKEEMDFPQLMKMRYLEVSEPQDIECCGALEYYDKAFDRITTRSEKPLRSIKRIFHTVTTTDDPVIRKLAKTQGNVFATDAILATLMSCTRSVYSWDIVVQRVGSKLFFDKRDNSDFDLLTVSETANEPPQDEGNSFNSPRNLAMEATYINHNFSQQCLRMGKERYNFPNPNPFVEDDMDKNEIASVAYRYRRWKLGDDIDLIVRCEHDGVMTGANGEVSFINIKTLNEWDSRHCNGVDWRQKLDSQRGAVIATELKNNSYKLARWTCCALLAGSEYLKLGYVSRYHVKDSSRHVILGTQQFKPNEFASQINLSVENAWGILRCVIDICMKLEEGKYLILKDPNKQVIRVYSLPDGTFSSDEDEEEEEEEEEEEEEEET</sequence>
<feature type="chain" id="PRO_0000123520" description="Eukaryotic translation initiation factor 3 subunit D">
    <location>
        <begin position="1"/>
        <end position="548"/>
    </location>
</feature>
<feature type="region of interest" description="RNA gate" evidence="1">
    <location>
        <begin position="285"/>
        <end position="299"/>
    </location>
</feature>
<feature type="region of interest" description="Disordered" evidence="4">
    <location>
        <begin position="523"/>
        <end position="548"/>
    </location>
</feature>
<feature type="compositionally biased region" description="Acidic residues" evidence="4">
    <location>
        <begin position="529"/>
        <end position="548"/>
    </location>
</feature>
<feature type="modified residue" description="N6-acetyllysine" evidence="2">
    <location>
        <position position="53"/>
    </location>
</feature>
<feature type="modified residue" description="Phosphoserine" evidence="25">
    <location>
        <position position="161"/>
    </location>
</feature>
<feature type="modified residue" description="Phosphoserine" evidence="23">
    <location>
        <position position="528"/>
    </location>
</feature>
<feature type="modified residue" description="Phosphoserine" evidence="22 23 24">
    <location>
        <position position="529"/>
    </location>
</feature>
<feature type="splice variant" id="VSP_055473" description="In isoform 2." evidence="20">
    <location>
        <begin position="54"/>
        <end position="102"/>
    </location>
</feature>
<feature type="splice variant" id="VSP_055474" description="In isoform 3." evidence="20">
    <location>
        <begin position="137"/>
        <end position="151"/>
    </location>
</feature>
<feature type="sequence variant" id="VAR_074184" description="In dbSNP:rs745920273." evidence="13">
    <original>R</original>
    <variation>C</variation>
    <location>
        <position position="310"/>
    </location>
</feature>
<feature type="mutagenesis site" description="Reduced binding to JUN mRNA; when associated with 262-I-A-263." evidence="19">
    <original>D</original>
    <variation>Q</variation>
    <location>
        <position position="249"/>
    </location>
</feature>
<feature type="mutagenesis site" description="Reduced binding to JUN mRNA; when associated with Q-249." evidence="19">
    <original>VY</original>
    <variation>IA</variation>
    <location>
        <begin position="262"/>
        <end position="263"/>
    </location>
</feature>
<feature type="mutagenesis site" description="Reduced binding to JUN mRNA." evidence="19">
    <original>TYINH</original>
    <variation>EYENA</variation>
    <location>
        <begin position="317"/>
        <end position="321"/>
    </location>
</feature>
<feature type="strand" evidence="26">
    <location>
        <begin position="35"/>
        <end position="37"/>
    </location>
</feature>
<feature type="turn" evidence="28">
    <location>
        <begin position="85"/>
        <end position="87"/>
    </location>
</feature>
<feature type="strand" evidence="27">
    <location>
        <begin position="169"/>
        <end position="175"/>
    </location>
</feature>
<feature type="helix" evidence="27">
    <location>
        <begin position="176"/>
        <end position="180"/>
    </location>
</feature>
<feature type="strand" evidence="27">
    <location>
        <begin position="193"/>
        <end position="196"/>
    </location>
</feature>
<feature type="helix" evidence="27">
    <location>
        <begin position="204"/>
        <end position="207"/>
    </location>
</feature>
<feature type="turn" evidence="27">
    <location>
        <begin position="229"/>
        <end position="231"/>
    </location>
</feature>
<feature type="helix" evidence="27">
    <location>
        <begin position="233"/>
        <end position="236"/>
    </location>
</feature>
<feature type="turn" evidence="27">
    <location>
        <begin position="237"/>
        <end position="241"/>
    </location>
</feature>
<feature type="strand" evidence="27">
    <location>
        <begin position="244"/>
        <end position="246"/>
    </location>
</feature>
<feature type="turn" evidence="27">
    <location>
        <begin position="253"/>
        <end position="256"/>
    </location>
</feature>
<feature type="turn" evidence="27">
    <location>
        <begin position="258"/>
        <end position="260"/>
    </location>
</feature>
<feature type="strand" evidence="27">
    <location>
        <begin position="267"/>
        <end position="270"/>
    </location>
</feature>
<feature type="strand" evidence="27">
    <location>
        <begin position="276"/>
        <end position="280"/>
    </location>
</feature>
<feature type="helix" evidence="27">
    <location>
        <begin position="309"/>
        <end position="322"/>
    </location>
</feature>
<feature type="helix" evidence="27">
    <location>
        <begin position="323"/>
        <end position="325"/>
    </location>
</feature>
<feature type="strand" evidence="27">
    <location>
        <begin position="342"/>
        <end position="345"/>
    </location>
</feature>
<feature type="strand" evidence="27">
    <location>
        <begin position="357"/>
        <end position="361"/>
    </location>
</feature>
<feature type="strand" evidence="27">
    <location>
        <begin position="371"/>
        <end position="374"/>
    </location>
</feature>
<feature type="strand" evidence="27">
    <location>
        <begin position="390"/>
        <end position="395"/>
    </location>
</feature>
<feature type="turn" evidence="27">
    <location>
        <begin position="401"/>
        <end position="405"/>
    </location>
</feature>
<feature type="helix" evidence="27">
    <location>
        <begin position="409"/>
        <end position="412"/>
    </location>
</feature>
<feature type="turn" evidence="27">
    <location>
        <begin position="413"/>
        <end position="415"/>
    </location>
</feature>
<feature type="helix" evidence="27">
    <location>
        <begin position="417"/>
        <end position="427"/>
    </location>
</feature>
<feature type="helix" evidence="27">
    <location>
        <begin position="430"/>
        <end position="441"/>
    </location>
</feature>
<feature type="strand" evidence="27">
    <location>
        <begin position="445"/>
        <end position="456"/>
    </location>
</feature>
<feature type="strand" evidence="27">
    <location>
        <begin position="463"/>
        <end position="471"/>
    </location>
</feature>
<feature type="helix" evidence="27">
    <location>
        <begin position="475"/>
        <end position="478"/>
    </location>
</feature>
<feature type="turn" evidence="27">
    <location>
        <begin position="479"/>
        <end position="481"/>
    </location>
</feature>
<feature type="helix" evidence="27">
    <location>
        <begin position="484"/>
        <end position="497"/>
    </location>
</feature>
<feature type="strand" evidence="27">
    <location>
        <begin position="503"/>
        <end position="507"/>
    </location>
</feature>
<feature type="turn" evidence="27">
    <location>
        <begin position="512"/>
        <end position="515"/>
    </location>
</feature>
<feature type="strand" evidence="27">
    <location>
        <begin position="516"/>
        <end position="521"/>
    </location>
</feature>
<gene>
    <name evidence="3" type="primary">EIF3D</name>
    <name evidence="3" type="synonym">EIF3S7</name>
</gene>
<comment type="function">
    <text evidence="9 14 19">mRNA cap-binding component of the eukaryotic translation initiation factor 3 (eIF-3) complex, a complex required for several steps in the initiation of protein synthesis of a specialized repertoire of mRNAs (PubMed:27462815). The eIF-3 complex associates with the 40S ribosome and facilitates the recruitment of eIF-1, eIF-1A, eIF-2:GTP:methionyl-tRNAi and eIF-5 to form the 43S pre-initiation complex (43S PIC). The eIF-3 complex stimulates mRNA recruitment to the 43S PIC and scanning of the mRNA for AUG recognition. The eIF-3 complex is also required for disassembly and recycling of post-termination ribosomal complexes and subsequently prevents premature joining of the 40S and 60S ribosomal subunits prior to initiation (PubMed:18599441, PubMed:25849773). The eIF-3 complex specifically targets and initiates translation of a subset of mRNAs involved in cell proliferation, including cell cycling, differentiation and apoptosis, and uses different modes of RNA stem-loop binding to exert either translational activation or repression (PubMed:25849773). In the eIF-3 complex, EIF3D specifically recognizes and binds the 7-methylguanosine cap of a subset of mRNAs (PubMed:27462815).</text>
</comment>
<comment type="function">
    <text evidence="8">(Microbial infection) In case of FCV infection, plays a role in the ribosomal termination-reinitiation event leading to the translation of VP2 (PubMed:18056426).</text>
</comment>
<comment type="subunit">
    <text evidence="3 5 6 7 9 14">Component of the eukaryotic translation initiation factor 3 (eIF-3) complex, which is composed of 13 subunits: EIF3A, EIF3B, EIF3C, EIF3D, EIF3E, EIF3F, EIF3G, EIF3H, EIF3I, EIF3J, EIF3K, EIF3L and EIF3M. The eIF-3 complex appears to include 3 stable modules: module A is composed of EIF3A, EIF3B, EIF3G and EIF3I; module B is composed of EIF3F, EIF3H, and EIF3M; and module C is composed of EIF3C, EIF3D, EIF3E, EIF3K and EIF3L. EIF3C of module C binds EIF3B of module A and EIF3H of module B, thereby linking the three modules. EIF3J is a labile subunit that binds to the eIF-3 complex via EIF3B. The eIF-3 complex interacts with RPS6KB1 under conditions of nutrient depletion. Mitogenic stimulation leads to binding and activation of a complex composed of MTOR and RPTOR, leading to phosphorylation and release of RPS6KB1 and binding of EIF4B to eIF-3.</text>
</comment>
<comment type="subunit">
    <text evidence="5">(Microbial infection) Interacts with Norwalk virus VPg protein (PubMed:12773399).</text>
</comment>
<comment type="interaction">
    <interactant intactId="EBI-353818">
        <id>O15371</id>
    </interactant>
    <interactant intactId="EBI-359567">
        <id>O15084</id>
        <label>ANKRD28</label>
    </interactant>
    <organismsDiffer>false</organismsDiffer>
    <experiments>3</experiments>
</comment>
<comment type="interaction">
    <interactant intactId="EBI-353818">
        <id>O15371</id>
    </interactant>
    <interactant intactId="EBI-724373">
        <id>Q7L4P6</id>
        <label>BEND5</label>
    </interactant>
    <organismsDiffer>false</organismsDiffer>
    <experiments>3</experiments>
</comment>
<comment type="interaction">
    <interactant intactId="EBI-353818">
        <id>O15371</id>
    </interactant>
    <interactant intactId="EBI-11977221">
        <id>Q86Z20</id>
        <label>CCDC125</label>
    </interactant>
    <organismsDiffer>false</organismsDiffer>
    <experiments>3</experiments>
</comment>
<comment type="interaction">
    <interactant intactId="EBI-353818">
        <id>O15371</id>
    </interactant>
    <interactant intactId="EBI-10961624">
        <id>Q2TAC2-2</id>
        <label>CCDC57</label>
    </interactant>
    <organismsDiffer>false</organismsDiffer>
    <experiments>3</experiments>
</comment>
<comment type="interaction">
    <interactant intactId="EBI-353818">
        <id>O15371</id>
    </interactant>
    <interactant intactId="EBI-739624">
        <id>Q8NHQ1</id>
        <label>CEP70</label>
    </interactant>
    <organismsDiffer>false</organismsDiffer>
    <experiments>3</experiments>
</comment>
<comment type="interaction">
    <interactant intactId="EBI-353818">
        <id>O15371</id>
    </interactant>
    <interactant intactId="EBI-739789">
        <id>Q92997</id>
        <label>DVL3</label>
    </interactant>
    <organismsDiffer>false</organismsDiffer>
    <experiments>3</experiments>
</comment>
<comment type="interaction">
    <interactant intactId="EBI-353818">
        <id>O15371</id>
    </interactant>
    <interactant intactId="EBI-366696">
        <id>P55884</id>
        <label>EIF3B</label>
    </interactant>
    <organismsDiffer>false</organismsDiffer>
    <experiments>7</experiments>
</comment>
<comment type="interaction">
    <interactant intactId="EBI-353818">
        <id>O15371</id>
    </interactant>
    <interactant intactId="EBI-347740">
        <id>P60228</id>
        <label>EIF3E</label>
    </interactant>
    <organismsDiffer>false</organismsDiffer>
    <experiments>8</experiments>
</comment>
<comment type="interaction">
    <interactant intactId="EBI-353818">
        <id>O15371</id>
    </interactant>
    <interactant intactId="EBI-5916454">
        <id>A6NEM1</id>
        <label>GOLGA6L9</label>
    </interactant>
    <organismsDiffer>false</organismsDiffer>
    <experiments>3</experiments>
</comment>
<comment type="interaction">
    <interactant intactId="EBI-353818">
        <id>O15371</id>
    </interactant>
    <interactant intactId="EBI-748420">
        <id>Q9NSC5</id>
        <label>HOMER3</label>
    </interactant>
    <organismsDiffer>false</organismsDiffer>
    <experiments>8</experiments>
</comment>
<comment type="interaction">
    <interactant intactId="EBI-353818">
        <id>O15371</id>
    </interactant>
    <interactant intactId="EBI-10961706">
        <id>Q96ED9-2</id>
        <label>HOOK2</label>
    </interactant>
    <organismsDiffer>false</organismsDiffer>
    <experiments>3</experiments>
</comment>
<comment type="interaction">
    <interactant intactId="EBI-353818">
        <id>O15371</id>
    </interactant>
    <interactant intactId="EBI-7116203">
        <id>O75031</id>
        <label>HSF2BP</label>
    </interactant>
    <organismsDiffer>false</organismsDiffer>
    <experiments>3</experiments>
</comment>
<comment type="interaction">
    <interactant intactId="EBI-353818">
        <id>O15371</id>
    </interactant>
    <interactant intactId="EBI-14069005">
        <id>Q9BVG8-5</id>
        <label>KIFC3</label>
    </interactant>
    <organismsDiffer>false</organismsDiffer>
    <experiments>3</experiments>
</comment>
<comment type="interaction">
    <interactant intactId="EBI-353818">
        <id>O15371</id>
    </interactant>
    <interactant intactId="EBI-741037">
        <id>Q9BRK4</id>
        <label>LZTS2</label>
    </interactant>
    <organismsDiffer>false</organismsDiffer>
    <experiments>3</experiments>
</comment>
<comment type="interaction">
    <interactant intactId="EBI-353818">
        <id>O15371</id>
    </interactant>
    <interactant intactId="EBI-9675802">
        <id>Q6PF18</id>
        <label>MORN3</label>
    </interactant>
    <organismsDiffer>false</organismsDiffer>
    <experiments>3</experiments>
</comment>
<comment type="interaction">
    <interactant intactId="EBI-353818">
        <id>O15371</id>
    </interactant>
    <interactant intactId="EBI-11522433">
        <id>Q5JR59-3</id>
        <label>MTUS2</label>
    </interactant>
    <organismsDiffer>false</organismsDiffer>
    <experiments>3</experiments>
</comment>
<comment type="interaction">
    <interactant intactId="EBI-353818">
        <id>O15371</id>
    </interactant>
    <interactant intactId="EBI-738731">
        <id>Q8WV24</id>
        <label>PHLDA1</label>
    </interactant>
    <organismsDiffer>false</organismsDiffer>
    <experiments>2</experiments>
</comment>
<comment type="interaction">
    <interactant intactId="EBI-353818">
        <id>O15371</id>
    </interactant>
    <interactant intactId="EBI-79165">
        <id>Q9NRD5</id>
        <label>PICK1</label>
    </interactant>
    <organismsDiffer>false</organismsDiffer>
    <experiments>3</experiments>
</comment>
<comment type="interaction">
    <interactant intactId="EBI-353818">
        <id>O15371</id>
    </interactant>
    <interactant intactId="EBI-347928">
        <id>P62487</id>
        <label>POLR2G</label>
    </interactant>
    <organismsDiffer>false</organismsDiffer>
    <experiments>3</experiments>
</comment>
<comment type="interaction">
    <interactant intactId="EBI-353818">
        <id>O15371</id>
    </interactant>
    <interactant intactId="EBI-307352">
        <id>Q04864</id>
        <label>REL</label>
    </interactant>
    <organismsDiffer>false</organismsDiffer>
    <experiments>3</experiments>
</comment>
<comment type="interaction">
    <interactant intactId="EBI-353818">
        <id>O15371</id>
    </interactant>
    <interactant intactId="EBI-711613">
        <id>P21673</id>
        <label>SAT1</label>
    </interactant>
    <organismsDiffer>false</organismsDiffer>
    <experiments>3</experiments>
</comment>
<comment type="interaction">
    <interactant intactId="EBI-353818">
        <id>O15371</id>
    </interactant>
    <interactant intactId="EBI-1105213">
        <id>Q9UBB9</id>
        <label>TFIP11</label>
    </interactant>
    <organismsDiffer>false</organismsDiffer>
    <experiments>3</experiments>
</comment>
<comment type="interaction">
    <interactant intactId="EBI-353818">
        <id>O15371</id>
    </interactant>
    <interactant intactId="EBI-740098">
        <id>P36406</id>
        <label>TRIM23</label>
    </interactant>
    <organismsDiffer>false</organismsDiffer>
    <experiments>3</experiments>
</comment>
<comment type="interaction">
    <interactant intactId="EBI-353818">
        <id>O15371</id>
    </interactant>
    <interactant intactId="EBI-719493">
        <id>P14373</id>
        <label>TRIM27</label>
    </interactant>
    <organismsDiffer>false</organismsDiffer>
    <experiments>6</experiments>
</comment>
<comment type="interaction">
    <interactant intactId="EBI-353818">
        <id>O15371</id>
    </interactant>
    <interactant intactId="EBI-527853">
        <id>Q9UGI0</id>
        <label>ZRANB1</label>
    </interactant>
    <organismsDiffer>false</organismsDiffer>
    <experiments>3</experiments>
</comment>
<comment type="interaction">
    <interactant intactId="EBI-353818">
        <id>O15371</id>
    </interactant>
    <interactant intactId="EBI-6248094">
        <id>Q9Q2G4</id>
        <label>ORF</label>
    </interactant>
    <organismsDiffer>true</organismsDiffer>
    <experiments>5</experiments>
</comment>
<comment type="subcellular location">
    <subcellularLocation>
        <location evidence="3">Cytoplasm</location>
    </subcellularLocation>
</comment>
<comment type="alternative products">
    <event type="alternative splicing"/>
    <isoform>
        <id>O15371-1</id>
        <name>1</name>
        <sequence type="displayed"/>
    </isoform>
    <isoform>
        <id>O15371-2</id>
        <name>2</name>
        <sequence type="described" ref="VSP_055473"/>
    </isoform>
    <isoform>
        <id>O15371-3</id>
        <name>3</name>
        <sequence type="described" ref="VSP_055474"/>
    </isoform>
</comment>
<comment type="domain">
    <text evidence="21">The RNA gate region regulates mRNA cap recognition to prevent promiscuous mRNA-binding before assembly of EIF3D into the full eukaryotic translation initiation factor 3 (eIF-3) complex.</text>
</comment>
<comment type="mass spectrometry"/>
<comment type="mass spectrometry"/>
<comment type="disease">
    <text evidence="10 11 12 15 16 17 18">Defects in EIF3D are associated with some cancers, such as prostate, breast and colon cancers. Disease susceptibility may be associated with variants affecting the gene represented in this entry. Down-regulation inhibits proliferation of cancers (PubMed:25322666, PubMed:25370813, PubMed:25682860, PubMed:26008152, PubMed:26036682, PubMed:26617750, PubMed:27035563).</text>
</comment>
<comment type="similarity">
    <text evidence="3">Belongs to the eIF-3 subunit D family.</text>
</comment>
<protein>
    <recommendedName>
        <fullName evidence="3">Eukaryotic translation initiation factor 3 subunit D</fullName>
        <shortName evidence="3">eIF3d</shortName>
    </recommendedName>
    <alternativeName>
        <fullName evidence="3">Eukaryotic translation initiation factor 3 subunit 7</fullName>
    </alternativeName>
    <alternativeName>
        <fullName evidence="3">eIF-3-zeta</fullName>
    </alternativeName>
    <alternativeName>
        <fullName>eIF3 p66</fullName>
    </alternativeName>
</protein>
<organism>
    <name type="scientific">Homo sapiens</name>
    <name type="common">Human</name>
    <dbReference type="NCBI Taxonomy" id="9606"/>
    <lineage>
        <taxon>Eukaryota</taxon>
        <taxon>Metazoa</taxon>
        <taxon>Chordata</taxon>
        <taxon>Craniata</taxon>
        <taxon>Vertebrata</taxon>
        <taxon>Euteleostomi</taxon>
        <taxon>Mammalia</taxon>
        <taxon>Eutheria</taxon>
        <taxon>Euarchontoglires</taxon>
        <taxon>Primates</taxon>
        <taxon>Haplorrhini</taxon>
        <taxon>Catarrhini</taxon>
        <taxon>Hominidae</taxon>
        <taxon>Homo</taxon>
    </lineage>
</organism>
<keyword id="KW-0002">3D-structure</keyword>
<keyword id="KW-0007">Acetylation</keyword>
<keyword id="KW-0025">Alternative splicing</keyword>
<keyword id="KW-0963">Cytoplasm</keyword>
<keyword id="KW-0945">Host-virus interaction</keyword>
<keyword id="KW-0396">Initiation factor</keyword>
<keyword id="KW-0597">Phosphoprotein</keyword>
<keyword id="KW-0648">Protein biosynthesis</keyword>
<keyword id="KW-1267">Proteomics identification</keyword>
<keyword id="KW-1185">Reference proteome</keyword>
<keyword id="KW-0694">RNA-binding</keyword>
<dbReference type="EMBL" id="U54558">
    <property type="protein sequence ID" value="AAD03466.1"/>
    <property type="molecule type" value="mRNA"/>
</dbReference>
<dbReference type="EMBL" id="BT007381">
    <property type="protein sequence ID" value="AAP36045.1"/>
    <property type="molecule type" value="mRNA"/>
</dbReference>
<dbReference type="EMBL" id="CR456489">
    <property type="protein sequence ID" value="CAG30375.1"/>
    <property type="molecule type" value="mRNA"/>
</dbReference>
<dbReference type="EMBL" id="AK300199">
    <property type="protein sequence ID" value="BAG61970.1"/>
    <property type="molecule type" value="mRNA"/>
</dbReference>
<dbReference type="EMBL" id="AK301284">
    <property type="protein sequence ID" value="BAG62843.1"/>
    <property type="molecule type" value="mRNA"/>
</dbReference>
<dbReference type="EMBL" id="AK312939">
    <property type="protein sequence ID" value="BAG35781.1"/>
    <property type="molecule type" value="mRNA"/>
</dbReference>
<dbReference type="EMBL" id="AL022313">
    <property type="status" value="NOT_ANNOTATED_CDS"/>
    <property type="molecule type" value="Genomic_DNA"/>
</dbReference>
<dbReference type="EMBL" id="CH471095">
    <property type="protein sequence ID" value="EAW60109.1"/>
    <property type="molecule type" value="Genomic_DNA"/>
</dbReference>
<dbReference type="EMBL" id="BC000328">
    <property type="protein sequence ID" value="AAH00328.1"/>
    <property type="molecule type" value="mRNA"/>
</dbReference>
<dbReference type="EMBL" id="BC000469">
    <property type="protein sequence ID" value="AAH00469.1"/>
    <property type="molecule type" value="mRNA"/>
</dbReference>
<dbReference type="EMBL" id="BC014912">
    <property type="protein sequence ID" value="AAH14912.1"/>
    <property type="molecule type" value="mRNA"/>
</dbReference>
<dbReference type="EMBL" id="BC080515">
    <property type="protein sequence ID" value="AAH80515.1"/>
    <property type="molecule type" value="mRNA"/>
</dbReference>
<dbReference type="EMBL" id="BC093100">
    <property type="protein sequence ID" value="AAH93100.1"/>
    <property type="molecule type" value="mRNA"/>
</dbReference>
<dbReference type="EMBL" id="BC093686">
    <property type="protein sequence ID" value="AAH93686.1"/>
    <property type="molecule type" value="mRNA"/>
</dbReference>
<dbReference type="EMBL" id="BC101477">
    <property type="protein sequence ID" value="AAI01478.1"/>
    <property type="molecule type" value="mRNA"/>
</dbReference>
<dbReference type="CCDS" id="CCDS13930.1">
    <molecule id="O15371-1"/>
</dbReference>
<dbReference type="RefSeq" id="NP_003744.1">
    <molecule id="O15371-1"/>
    <property type="nucleotide sequence ID" value="NM_003753.4"/>
</dbReference>
<dbReference type="PDB" id="6YBD">
    <property type="method" value="EM"/>
    <property type="resolution" value="3.30 A"/>
    <property type="chains" value="x=1-548"/>
</dbReference>
<dbReference type="PDB" id="6YBS">
    <property type="method" value="EM"/>
    <property type="resolution" value="3.10 A"/>
    <property type="chains" value="x=1-548"/>
</dbReference>
<dbReference type="PDB" id="6ZMW">
    <property type="method" value="EM"/>
    <property type="resolution" value="3.70 A"/>
    <property type="chains" value="x=1-548"/>
</dbReference>
<dbReference type="PDB" id="6ZON">
    <property type="method" value="EM"/>
    <property type="resolution" value="3.00 A"/>
    <property type="chains" value="D=1-548"/>
</dbReference>
<dbReference type="PDB" id="6ZP4">
    <property type="method" value="EM"/>
    <property type="resolution" value="2.90 A"/>
    <property type="chains" value="N=1-548"/>
</dbReference>
<dbReference type="PDB" id="6ZVJ">
    <property type="method" value="EM"/>
    <property type="resolution" value="3.80 A"/>
    <property type="chains" value="D=1-527"/>
</dbReference>
<dbReference type="PDB" id="7A09">
    <property type="method" value="EM"/>
    <property type="resolution" value="3.50 A"/>
    <property type="chains" value="N=1-548"/>
</dbReference>
<dbReference type="PDB" id="7QP6">
    <property type="method" value="EM"/>
    <property type="resolution" value="4.70 A"/>
    <property type="chains" value="x=1-548"/>
</dbReference>
<dbReference type="PDB" id="7QP7">
    <property type="method" value="EM"/>
    <property type="resolution" value="3.70 A"/>
    <property type="chains" value="x=1-548"/>
</dbReference>
<dbReference type="PDB" id="8OZ0">
    <property type="method" value="EM"/>
    <property type="resolution" value="3.50 A"/>
    <property type="chains" value="x=1-548"/>
</dbReference>
<dbReference type="PDB" id="8PJ1">
    <property type="method" value="EM"/>
    <property type="resolution" value="3.40 A"/>
    <property type="chains" value="x=1-548"/>
</dbReference>
<dbReference type="PDB" id="8PJ2">
    <property type="method" value="EM"/>
    <property type="resolution" value="3.40 A"/>
    <property type="chains" value="x=1-548"/>
</dbReference>
<dbReference type="PDB" id="8PJ3">
    <property type="method" value="EM"/>
    <property type="resolution" value="3.70 A"/>
    <property type="chains" value="x=1-548"/>
</dbReference>
<dbReference type="PDB" id="8PJ4">
    <property type="method" value="EM"/>
    <property type="resolution" value="3.20 A"/>
    <property type="chains" value="x=1-548"/>
</dbReference>
<dbReference type="PDB" id="8PJ5">
    <property type="method" value="EM"/>
    <property type="resolution" value="2.90 A"/>
    <property type="chains" value="x=1-548"/>
</dbReference>
<dbReference type="PDB" id="8PJ6">
    <property type="method" value="EM"/>
    <property type="resolution" value="2.90 A"/>
    <property type="chains" value="x=1-548"/>
</dbReference>
<dbReference type="PDB" id="8PPL">
    <property type="method" value="EM"/>
    <property type="resolution" value="2.65 A"/>
    <property type="chains" value="Ix=1-548"/>
</dbReference>
<dbReference type="PDB" id="8RG0">
    <property type="method" value="EM"/>
    <property type="resolution" value="3.40 A"/>
    <property type="chains" value="x=1-548"/>
</dbReference>
<dbReference type="PDB" id="8XXN">
    <property type="method" value="EM"/>
    <property type="resolution" value="3.60 A"/>
    <property type="chains" value="3N=1-548"/>
</dbReference>
<dbReference type="PDB" id="9BLN">
    <property type="method" value="EM"/>
    <property type="resolution" value="3.90 A"/>
    <property type="chains" value="x=1-548"/>
</dbReference>
<dbReference type="PDBsum" id="6YBD"/>
<dbReference type="PDBsum" id="6YBS"/>
<dbReference type="PDBsum" id="6ZMW"/>
<dbReference type="PDBsum" id="6ZON"/>
<dbReference type="PDBsum" id="6ZP4"/>
<dbReference type="PDBsum" id="6ZVJ"/>
<dbReference type="PDBsum" id="7A09"/>
<dbReference type="PDBsum" id="7QP6"/>
<dbReference type="PDBsum" id="7QP7"/>
<dbReference type="PDBsum" id="8OZ0"/>
<dbReference type="PDBsum" id="8PJ1"/>
<dbReference type="PDBsum" id="8PJ2"/>
<dbReference type="PDBsum" id="8PJ3"/>
<dbReference type="PDBsum" id="8PJ4"/>
<dbReference type="PDBsum" id="8PJ5"/>
<dbReference type="PDBsum" id="8PJ6"/>
<dbReference type="PDBsum" id="8PPL"/>
<dbReference type="PDBsum" id="8RG0"/>
<dbReference type="PDBsum" id="8XXN"/>
<dbReference type="PDBsum" id="9BLN"/>
<dbReference type="EMDB" id="EMD-10769"/>
<dbReference type="EMDB" id="EMD-10772"/>
<dbReference type="EMDB" id="EMD-11302"/>
<dbReference type="EMDB" id="EMD-11325"/>
<dbReference type="EMDB" id="EMD-11335"/>
<dbReference type="EMDB" id="EMD-11458"/>
<dbReference type="EMDB" id="EMD-11602"/>
<dbReference type="EMDB" id="EMD-14113"/>
<dbReference type="EMDB" id="EMD-14114"/>
<dbReference type="EMDB" id="EMD-17297"/>
<dbReference type="EMDB" id="EMD-17696"/>
<dbReference type="EMDB" id="EMD-17697"/>
<dbReference type="EMDB" id="EMD-17698"/>
<dbReference type="EMDB" id="EMD-17699"/>
<dbReference type="EMDB" id="EMD-17700"/>
<dbReference type="EMDB" id="EMD-17701"/>
<dbReference type="EMDB" id="EMD-17805"/>
<dbReference type="EMDB" id="EMD-19128"/>
<dbReference type="EMDB" id="EMD-38754"/>
<dbReference type="EMDB" id="EMD-44671"/>
<dbReference type="SMR" id="O15371"/>
<dbReference type="BioGRID" id="114213">
    <property type="interactions" value="265"/>
</dbReference>
<dbReference type="ComplexPortal" id="CPX-6036">
    <property type="entry name" value="Eukaryotic translation initiation factor 3 complex"/>
</dbReference>
<dbReference type="CORUM" id="O15371"/>
<dbReference type="DIP" id="DIP-32870N"/>
<dbReference type="FunCoup" id="O15371">
    <property type="interactions" value="3343"/>
</dbReference>
<dbReference type="IntAct" id="O15371">
    <property type="interactions" value="150"/>
</dbReference>
<dbReference type="MINT" id="O15371"/>
<dbReference type="STRING" id="9606.ENSP00000216190"/>
<dbReference type="MoonProt" id="O15371"/>
<dbReference type="GlyCosmos" id="O15371">
    <property type="glycosylation" value="2 sites, 1 glycan"/>
</dbReference>
<dbReference type="GlyGen" id="O15371">
    <property type="glycosylation" value="3 sites, 1 O-linked glycan (3 sites)"/>
</dbReference>
<dbReference type="iPTMnet" id="O15371"/>
<dbReference type="MetOSite" id="O15371"/>
<dbReference type="PhosphoSitePlus" id="O15371"/>
<dbReference type="SwissPalm" id="O15371"/>
<dbReference type="BioMuta" id="EIF3D"/>
<dbReference type="jPOST" id="O15371"/>
<dbReference type="MassIVE" id="O15371"/>
<dbReference type="PaxDb" id="9606-ENSP00000216190"/>
<dbReference type="PeptideAtlas" id="O15371"/>
<dbReference type="ProteomicsDB" id="2242"/>
<dbReference type="ProteomicsDB" id="48614">
    <molecule id="O15371-1"/>
</dbReference>
<dbReference type="ProteomicsDB" id="5301"/>
<dbReference type="Pumba" id="O15371"/>
<dbReference type="Antibodypedia" id="25691">
    <property type="antibodies" value="265 antibodies from 32 providers"/>
</dbReference>
<dbReference type="DNASU" id="8664"/>
<dbReference type="Ensembl" id="ENST00000216190.13">
    <molecule id="O15371-1"/>
    <property type="protein sequence ID" value="ENSP00000216190.8"/>
    <property type="gene ID" value="ENSG00000100353.18"/>
</dbReference>
<dbReference type="Ensembl" id="ENST00000405442.5">
    <molecule id="O15371-1"/>
    <property type="protein sequence ID" value="ENSP00000385812.1"/>
    <property type="gene ID" value="ENSG00000100353.18"/>
</dbReference>
<dbReference type="GeneID" id="8664"/>
<dbReference type="KEGG" id="hsa:8664"/>
<dbReference type="MANE-Select" id="ENST00000216190.13">
    <property type="protein sequence ID" value="ENSP00000216190.8"/>
    <property type="RefSeq nucleotide sequence ID" value="NM_003753.4"/>
    <property type="RefSeq protein sequence ID" value="NP_003744.1"/>
</dbReference>
<dbReference type="UCSC" id="uc003apr.4">
    <molecule id="O15371-1"/>
    <property type="organism name" value="human"/>
</dbReference>
<dbReference type="AGR" id="HGNC:3278"/>
<dbReference type="CTD" id="8664"/>
<dbReference type="DisGeNET" id="8664"/>
<dbReference type="GeneCards" id="EIF3D"/>
<dbReference type="HGNC" id="HGNC:3278">
    <property type="gene designation" value="EIF3D"/>
</dbReference>
<dbReference type="HPA" id="ENSG00000100353">
    <property type="expression patterns" value="Low tissue specificity"/>
</dbReference>
<dbReference type="MIM" id="603915">
    <property type="type" value="gene"/>
</dbReference>
<dbReference type="neXtProt" id="NX_O15371"/>
<dbReference type="OpenTargets" id="ENSG00000100353"/>
<dbReference type="PharmGKB" id="PA162384740"/>
<dbReference type="VEuPathDB" id="HostDB:ENSG00000100353"/>
<dbReference type="eggNOG" id="KOG2479">
    <property type="taxonomic scope" value="Eukaryota"/>
</dbReference>
<dbReference type="GeneTree" id="ENSGT00390000002667"/>
<dbReference type="HOGENOM" id="CLU_024521_2_0_1"/>
<dbReference type="InParanoid" id="O15371"/>
<dbReference type="OMA" id="FMDKRDN"/>
<dbReference type="OrthoDB" id="16538at2759"/>
<dbReference type="PAN-GO" id="O15371">
    <property type="GO annotations" value="2 GO annotations based on evolutionary models"/>
</dbReference>
<dbReference type="PhylomeDB" id="O15371"/>
<dbReference type="TreeFam" id="TF101519"/>
<dbReference type="PathwayCommons" id="O15371"/>
<dbReference type="Reactome" id="R-HSA-156827">
    <property type="pathway name" value="L13a-mediated translational silencing of Ceruloplasmin expression"/>
</dbReference>
<dbReference type="Reactome" id="R-HSA-72649">
    <property type="pathway name" value="Translation initiation complex formation"/>
</dbReference>
<dbReference type="Reactome" id="R-HSA-72689">
    <property type="pathway name" value="Formation of a pool of free 40S subunits"/>
</dbReference>
<dbReference type="Reactome" id="R-HSA-72695">
    <property type="pathway name" value="Formation of the ternary complex, and subsequently, the 43S complex"/>
</dbReference>
<dbReference type="Reactome" id="R-HSA-72702">
    <property type="pathway name" value="Ribosomal scanning and start codon recognition"/>
</dbReference>
<dbReference type="Reactome" id="R-HSA-72706">
    <property type="pathway name" value="GTP hydrolysis and joining of the 60S ribosomal subunit"/>
</dbReference>
<dbReference type="SignaLink" id="O15371"/>
<dbReference type="SIGNOR" id="O15371"/>
<dbReference type="BioGRID-ORCS" id="8664">
    <property type="hits" value="846 hits in 1172 CRISPR screens"/>
</dbReference>
<dbReference type="CD-CODE" id="DEE660B4">
    <property type="entry name" value="Stress granule"/>
</dbReference>
<dbReference type="ChiTaRS" id="EIF3D">
    <property type="organism name" value="human"/>
</dbReference>
<dbReference type="GeneWiki" id="EIF3D"/>
<dbReference type="GenomeRNAi" id="8664"/>
<dbReference type="Pharos" id="O15371">
    <property type="development level" value="Tbio"/>
</dbReference>
<dbReference type="PRO" id="PR:O15371"/>
<dbReference type="Proteomes" id="UP000005640">
    <property type="component" value="Chromosome 22"/>
</dbReference>
<dbReference type="RNAct" id="O15371">
    <property type="molecule type" value="protein"/>
</dbReference>
<dbReference type="Bgee" id="ENSG00000100353">
    <property type="expression patterns" value="Expressed in body of pancreas and 213 other cell types or tissues"/>
</dbReference>
<dbReference type="ExpressionAtlas" id="O15371">
    <property type="expression patterns" value="baseline and differential"/>
</dbReference>
<dbReference type="GO" id="GO:0005829">
    <property type="term" value="C:cytosol"/>
    <property type="evidence" value="ECO:0000304"/>
    <property type="project" value="Reactome"/>
</dbReference>
<dbReference type="GO" id="GO:0016282">
    <property type="term" value="C:eukaryotic 43S preinitiation complex"/>
    <property type="evidence" value="ECO:0007669"/>
    <property type="project" value="UniProtKB-UniRule"/>
</dbReference>
<dbReference type="GO" id="GO:0033290">
    <property type="term" value="C:eukaryotic 48S preinitiation complex"/>
    <property type="evidence" value="ECO:0007669"/>
    <property type="project" value="UniProtKB-UniRule"/>
</dbReference>
<dbReference type="GO" id="GO:0005852">
    <property type="term" value="C:eukaryotic translation initiation factor 3 complex"/>
    <property type="evidence" value="ECO:0000314"/>
    <property type="project" value="UniProtKB"/>
</dbReference>
<dbReference type="GO" id="GO:0071541">
    <property type="term" value="C:eukaryotic translation initiation factor 3 complex, eIF3m"/>
    <property type="evidence" value="ECO:0007669"/>
    <property type="project" value="Ensembl"/>
</dbReference>
<dbReference type="GO" id="GO:0016020">
    <property type="term" value="C:membrane"/>
    <property type="evidence" value="ECO:0007005"/>
    <property type="project" value="UniProtKB"/>
</dbReference>
<dbReference type="GO" id="GO:0045202">
    <property type="term" value="C:synapse"/>
    <property type="evidence" value="ECO:0007669"/>
    <property type="project" value="Ensembl"/>
</dbReference>
<dbReference type="GO" id="GO:0098808">
    <property type="term" value="F:mRNA cap binding"/>
    <property type="evidence" value="ECO:0000314"/>
    <property type="project" value="UniProtKB"/>
</dbReference>
<dbReference type="GO" id="GO:0003723">
    <property type="term" value="F:RNA binding"/>
    <property type="evidence" value="ECO:0000314"/>
    <property type="project" value="UniProtKB"/>
</dbReference>
<dbReference type="GO" id="GO:0003743">
    <property type="term" value="F:translation initiation factor activity"/>
    <property type="evidence" value="ECO:0007669"/>
    <property type="project" value="UniProtKB-UniRule"/>
</dbReference>
<dbReference type="GO" id="GO:0002191">
    <property type="term" value="P:cap-dependent translational initiation"/>
    <property type="evidence" value="ECO:0000314"/>
    <property type="project" value="UniProtKB"/>
</dbReference>
<dbReference type="GO" id="GO:0001732">
    <property type="term" value="P:formation of cytoplasmic translation initiation complex"/>
    <property type="evidence" value="ECO:0000314"/>
    <property type="project" value="ParkinsonsUK-UCL"/>
</dbReference>
<dbReference type="GO" id="GO:0075522">
    <property type="term" value="P:IRES-dependent viral translational initiation"/>
    <property type="evidence" value="ECO:0000314"/>
    <property type="project" value="UniProtKB"/>
</dbReference>
<dbReference type="GO" id="GO:0006413">
    <property type="term" value="P:translational initiation"/>
    <property type="evidence" value="ECO:0000314"/>
    <property type="project" value="UniProtKB"/>
</dbReference>
<dbReference type="GO" id="GO:0075525">
    <property type="term" value="P:viral translational termination-reinitiation"/>
    <property type="evidence" value="ECO:0000314"/>
    <property type="project" value="UniProtKB"/>
</dbReference>
<dbReference type="HAMAP" id="MF_03003">
    <property type="entry name" value="eIF3d"/>
    <property type="match status" value="1"/>
</dbReference>
<dbReference type="InterPro" id="IPR007783">
    <property type="entry name" value="eIF3d"/>
</dbReference>
<dbReference type="PANTHER" id="PTHR12399">
    <property type="entry name" value="EUKARYOTIC TRANSLATION INITIATION FACTOR 3 SUBUNIT 7"/>
    <property type="match status" value="1"/>
</dbReference>
<dbReference type="PANTHER" id="PTHR12399:SF0">
    <property type="entry name" value="EUKARYOTIC TRANSLATION INITIATION FACTOR 3 SUBUNIT D"/>
    <property type="match status" value="1"/>
</dbReference>
<dbReference type="Pfam" id="PF05091">
    <property type="entry name" value="eIF-3_zeta"/>
    <property type="match status" value="1"/>
</dbReference>
<dbReference type="PIRSF" id="PIRSF016281">
    <property type="entry name" value="EIF-3_zeta"/>
    <property type="match status" value="1"/>
</dbReference>